<name>S6A17_RAT</name>
<reference key="1">
    <citation type="journal article" date="1993" name="FEBS Lett.">
        <title>A rat brain cDNA encoding the neurotransmitter transporter with an unusual structure.</title>
        <authorList>
            <person name="Liu Q.-R."/>
            <person name="Mandiyan S."/>
            <person name="Lopez-Corcuera B."/>
            <person name="Nelson H."/>
            <person name="Nelson N."/>
        </authorList>
    </citation>
    <scope>NUCLEOTIDE SEQUENCE [MRNA]</scope>
    <source>
        <tissue>Brain</tissue>
    </source>
</reference>
<reference key="2">
    <citation type="journal article" date="1994" name="J. Neurochem.">
        <title>Characterization of an atypical member of the Na+/Cl(-)-dependent transporter family: chromosomal localization and distribution in GABAergic and glutamatergic neurons in the rat brain.</title>
        <authorList>
            <person name="el Mestikawy S."/>
            <person name="Giros B."/>
            <person name="Pohl M."/>
            <person name="Hamon M."/>
            <person name="Kingsmore S.F."/>
            <person name="Seldin M.F."/>
            <person name="Caron M.G."/>
        </authorList>
    </citation>
    <scope>NUCLEOTIDE SEQUENCE [MRNA]</scope>
</reference>
<reference key="3">
    <citation type="journal article" date="2005" name="Biochem. Biophys. Res. Commun.">
        <title>The repertoire of solute carriers of family 6: identification of new human and rodent genes.</title>
        <authorList>
            <person name="Hoglund P.J."/>
            <person name="Adzic D."/>
            <person name="Scicluna S.J."/>
            <person name="Lindblom J."/>
            <person name="Fredriksson R."/>
        </authorList>
    </citation>
    <scope>IDENTIFICATION</scope>
    <scope>TISSUE SPECIFICITY</scope>
</reference>
<reference key="4">
    <citation type="journal article" date="2008" name="Mol. Pharmacol.">
        <title>The orphan transporter Rxt1/NTT4 (SLC6A17) functions as a synaptic vesicle amino acid transporter selective for proline, glycine, leucine, and alanine.</title>
        <authorList>
            <person name="Parra L.A."/>
            <person name="Baust T."/>
            <person name="El Mestikawy S."/>
            <person name="Quiroz M."/>
            <person name="Hoffman B."/>
            <person name="Haflett J.M."/>
            <person name="Yao J.K."/>
            <person name="Torres G.E."/>
        </authorList>
    </citation>
    <scope>FUNCTION</scope>
    <scope>TRANSPORTER ACTIVITY</scope>
    <scope>BIOPHYSICOCHEMICAL PROPERTIES</scope>
    <scope>TISSUE SPECIFICITY</scope>
    <scope>SUBCELLULAR LOCATION</scope>
</reference>
<reference key="5">
    <citation type="journal article" date="2009" name="J. Biol. Chem.">
        <title>Synaptic vesicle protein NTT4/XT1 (SLC6A17) catalyzes Na+-coupled neutral amino acid transport.</title>
        <authorList>
            <person name="Zaia K.A."/>
            <person name="Reimer R.J."/>
        </authorList>
    </citation>
    <scope>FUNCTION</scope>
    <scope>TRANSPORTER ACTIVITY</scope>
    <scope>BIOPHYSICOCHEMICAL PROPERTIES</scope>
    <scope>SUBCELLULAR LOCATION</scope>
</reference>
<reference key="6">
    <citation type="journal article" date="2012" name="Nat. Commun.">
        <title>Quantitative maps of protein phosphorylation sites across 14 different rat organs and tissues.</title>
        <authorList>
            <person name="Lundby A."/>
            <person name="Secher A."/>
            <person name="Lage K."/>
            <person name="Nordsborg N.B."/>
            <person name="Dmytriyev A."/>
            <person name="Lundby C."/>
            <person name="Olsen J.V."/>
        </authorList>
    </citation>
    <scope>PHOSPHORYLATION [LARGE SCALE ANALYSIS] AT SER-665 AND SER-701</scope>
    <scope>IDENTIFICATION BY MASS SPECTROMETRY [LARGE SCALE ANALYSIS]</scope>
</reference>
<accession>P31662</accession>
<dbReference type="EMBL" id="L06434">
    <property type="protein sequence ID" value="AAB24776.1"/>
    <property type="molecule type" value="mRNA"/>
</dbReference>
<dbReference type="EMBL" id="S68944">
    <property type="protein sequence ID" value="AAC60673.1"/>
    <property type="molecule type" value="mRNA"/>
</dbReference>
<dbReference type="PIR" id="I56506">
    <property type="entry name" value="I56506"/>
</dbReference>
<dbReference type="PIR" id="S27043">
    <property type="entry name" value="S27043"/>
</dbReference>
<dbReference type="RefSeq" id="NP_001028251.1">
    <property type="nucleotide sequence ID" value="NM_001033079.2"/>
</dbReference>
<dbReference type="RefSeq" id="XP_063138514.1">
    <property type="nucleotide sequence ID" value="XM_063282444.1"/>
</dbReference>
<dbReference type="RefSeq" id="XP_063138515.1">
    <property type="nucleotide sequence ID" value="XM_063282445.1"/>
</dbReference>
<dbReference type="SMR" id="P31662"/>
<dbReference type="BioGRID" id="565981">
    <property type="interactions" value="1"/>
</dbReference>
<dbReference type="FunCoup" id="P31662">
    <property type="interactions" value="1073"/>
</dbReference>
<dbReference type="STRING" id="10116.ENSRNOP00000065179"/>
<dbReference type="TCDB" id="2.A.22.6.2">
    <property type="family name" value="the neurotransmitter:sodium symporter (nss) family"/>
</dbReference>
<dbReference type="GlyCosmos" id="P31662">
    <property type="glycosylation" value="2 sites, No reported glycans"/>
</dbReference>
<dbReference type="GlyGen" id="P31662">
    <property type="glycosylation" value="2 sites"/>
</dbReference>
<dbReference type="iPTMnet" id="P31662"/>
<dbReference type="PhosphoSitePlus" id="P31662"/>
<dbReference type="SwissPalm" id="P31662"/>
<dbReference type="PaxDb" id="10116-ENSRNOP00000065179"/>
<dbReference type="Ensembl" id="ENSRNOT00000075653.3">
    <property type="protein sequence ID" value="ENSRNOP00000065179.1"/>
    <property type="gene ID" value="ENSRNOG00000050090.3"/>
</dbReference>
<dbReference type="GeneID" id="613226"/>
<dbReference type="KEGG" id="rno:613226"/>
<dbReference type="AGR" id="RGD:1587185"/>
<dbReference type="CTD" id="388662"/>
<dbReference type="RGD" id="1587185">
    <property type="gene designation" value="Slc6a17"/>
</dbReference>
<dbReference type="eggNOG" id="KOG3659">
    <property type="taxonomic scope" value="Eukaryota"/>
</dbReference>
<dbReference type="GeneTree" id="ENSGT00940000156542"/>
<dbReference type="HOGENOM" id="CLU_006855_7_1_1"/>
<dbReference type="InParanoid" id="P31662"/>
<dbReference type="OMA" id="DYTEMYK"/>
<dbReference type="OrthoDB" id="6581954at2759"/>
<dbReference type="PhylomeDB" id="P31662"/>
<dbReference type="PRO" id="PR:P31662"/>
<dbReference type="Proteomes" id="UP000002494">
    <property type="component" value="Chromosome 2"/>
</dbReference>
<dbReference type="Bgee" id="ENSRNOG00000050090">
    <property type="expression patterns" value="Expressed in frontal cortex and 15 other cell types or tissues"/>
</dbReference>
<dbReference type="GO" id="GO:0042995">
    <property type="term" value="C:cell projection"/>
    <property type="evidence" value="ECO:0007669"/>
    <property type="project" value="UniProtKB-KW"/>
</dbReference>
<dbReference type="GO" id="GO:0098982">
    <property type="term" value="C:GABA-ergic synapse"/>
    <property type="evidence" value="ECO:0000314"/>
    <property type="project" value="SynGO"/>
</dbReference>
<dbReference type="GO" id="GO:0098978">
    <property type="term" value="C:glutamatergic synapse"/>
    <property type="evidence" value="ECO:0000314"/>
    <property type="project" value="SynGO"/>
</dbReference>
<dbReference type="GO" id="GO:0016020">
    <property type="term" value="C:membrane"/>
    <property type="evidence" value="ECO:0000318"/>
    <property type="project" value="GO_Central"/>
</dbReference>
<dbReference type="GO" id="GO:0005886">
    <property type="term" value="C:plasma membrane"/>
    <property type="evidence" value="ECO:0007669"/>
    <property type="project" value="InterPro"/>
</dbReference>
<dbReference type="GO" id="GO:0098794">
    <property type="term" value="C:postsynapse"/>
    <property type="evidence" value="ECO:0007669"/>
    <property type="project" value="UniProtKB-SubCell"/>
</dbReference>
<dbReference type="GO" id="GO:0045202">
    <property type="term" value="C:synapse"/>
    <property type="evidence" value="ECO:0000314"/>
    <property type="project" value="SynGO"/>
</dbReference>
<dbReference type="GO" id="GO:0008021">
    <property type="term" value="C:synaptic vesicle"/>
    <property type="evidence" value="ECO:0000314"/>
    <property type="project" value="UniProtKB"/>
</dbReference>
<dbReference type="GO" id="GO:0030672">
    <property type="term" value="C:synaptic vesicle membrane"/>
    <property type="evidence" value="ECO:0000314"/>
    <property type="project" value="SynGO"/>
</dbReference>
<dbReference type="GO" id="GO:0015293">
    <property type="term" value="F:symporter activity"/>
    <property type="evidence" value="ECO:0007669"/>
    <property type="project" value="UniProtKB-KW"/>
</dbReference>
<dbReference type="GO" id="GO:0032328">
    <property type="term" value="P:alanine transport"/>
    <property type="evidence" value="ECO:0000314"/>
    <property type="project" value="UniProtKB"/>
</dbReference>
<dbReference type="GO" id="GO:0007420">
    <property type="term" value="P:brain development"/>
    <property type="evidence" value="ECO:0000250"/>
    <property type="project" value="UniProtKB"/>
</dbReference>
<dbReference type="GO" id="GO:0015816">
    <property type="term" value="P:glycine transport"/>
    <property type="evidence" value="ECO:0000314"/>
    <property type="project" value="UniProtKB"/>
</dbReference>
<dbReference type="GO" id="GO:0015820">
    <property type="term" value="P:L-leucine transport"/>
    <property type="evidence" value="ECO:0000314"/>
    <property type="project" value="UniProtKB"/>
</dbReference>
<dbReference type="GO" id="GO:0006836">
    <property type="term" value="P:neurotransmitter transport"/>
    <property type="evidence" value="ECO:0007669"/>
    <property type="project" value="UniProtKB-KW"/>
</dbReference>
<dbReference type="GO" id="GO:0015804">
    <property type="term" value="P:neutral amino acid transport"/>
    <property type="evidence" value="ECO:0000314"/>
    <property type="project" value="UniProtKB"/>
</dbReference>
<dbReference type="GO" id="GO:0015824">
    <property type="term" value="P:proline transport"/>
    <property type="evidence" value="ECO:0000314"/>
    <property type="project" value="UniProtKB"/>
</dbReference>
<dbReference type="GO" id="GO:0030163">
    <property type="term" value="P:protein catabolic process"/>
    <property type="evidence" value="ECO:0000314"/>
    <property type="project" value="SynGO"/>
</dbReference>
<dbReference type="GO" id="GO:0035725">
    <property type="term" value="P:sodium ion transmembrane transport"/>
    <property type="evidence" value="ECO:0000318"/>
    <property type="project" value="GO_Central"/>
</dbReference>
<dbReference type="CDD" id="cd11521">
    <property type="entry name" value="SLC6sbd_NTT4"/>
    <property type="match status" value="1"/>
</dbReference>
<dbReference type="InterPro" id="IPR000175">
    <property type="entry name" value="Na/ntran_symport"/>
</dbReference>
<dbReference type="InterPro" id="IPR002438">
    <property type="entry name" value="Neutral_aa_SLC6"/>
</dbReference>
<dbReference type="InterPro" id="IPR037272">
    <property type="entry name" value="SNS_sf"/>
</dbReference>
<dbReference type="NCBIfam" id="NF037979">
    <property type="entry name" value="Na_transp"/>
    <property type="match status" value="1"/>
</dbReference>
<dbReference type="PANTHER" id="PTHR11616:SF102">
    <property type="entry name" value="SODIUM-DEPENDENT NEUTRAL AMINO ACID TRANSPORTER SLC6A17"/>
    <property type="match status" value="1"/>
</dbReference>
<dbReference type="PANTHER" id="PTHR11616">
    <property type="entry name" value="SODIUM/CHLORIDE DEPENDENT TRANSPORTER"/>
    <property type="match status" value="1"/>
</dbReference>
<dbReference type="Pfam" id="PF00209">
    <property type="entry name" value="SNF"/>
    <property type="match status" value="1"/>
</dbReference>
<dbReference type="PRINTS" id="PR00176">
    <property type="entry name" value="NANEUSMPORT"/>
</dbReference>
<dbReference type="PRINTS" id="PR01206">
    <property type="entry name" value="ORPHTRNSPORT"/>
</dbReference>
<dbReference type="SUPFAM" id="SSF161070">
    <property type="entry name" value="SNF-like"/>
    <property type="match status" value="1"/>
</dbReference>
<dbReference type="PROSITE" id="PS00610">
    <property type="entry name" value="NA_NEUROTRAN_SYMP_1"/>
    <property type="match status" value="1"/>
</dbReference>
<dbReference type="PROSITE" id="PS00754">
    <property type="entry name" value="NA_NEUROTRAN_SYMP_2"/>
    <property type="match status" value="1"/>
</dbReference>
<dbReference type="PROSITE" id="PS50267">
    <property type="entry name" value="NA_NEUROTRAN_SYMP_3"/>
    <property type="match status" value="1"/>
</dbReference>
<evidence type="ECO:0000250" key="1">
    <source>
        <dbReference type="UniProtKB" id="Q8BJI1"/>
    </source>
</evidence>
<evidence type="ECO:0000255" key="2"/>
<evidence type="ECO:0000256" key="3">
    <source>
        <dbReference type="SAM" id="MobiDB-lite"/>
    </source>
</evidence>
<evidence type="ECO:0000269" key="4">
    <source>
    </source>
</evidence>
<evidence type="ECO:0000269" key="5">
    <source>
    </source>
</evidence>
<evidence type="ECO:0000269" key="6">
    <source>
    </source>
</evidence>
<evidence type="ECO:0000303" key="7">
    <source>
    </source>
</evidence>
<evidence type="ECO:0000305" key="8"/>
<evidence type="ECO:0000305" key="9">
    <source>
    </source>
</evidence>
<evidence type="ECO:0000305" key="10">
    <source>
    </source>
</evidence>
<evidence type="ECO:0007744" key="11">
    <source>
    </source>
</evidence>
<gene>
    <name evidence="7" type="primary">Slc6a17</name>
    <name evidence="7" type="synonym">Ntt4</name>
    <name evidence="7" type="synonym">Rxt1</name>
</gene>
<sequence length="727" mass="81055">MPKNSKVTQREHSNEHVTESVADLLALEEPVDYKQSVLNVAGETGGKQKVAEEELDAEDRPAWNSKLQYILAQIGFSVGLGNIWRFPYLCQKNGGGAYLVPYLVLLIIIGIPLFFLELAVGQRIRRGSIGVWHYVCPRLGGIGFSSCIVCLFVGLYYNVIIGWSVFYFFKSFQYPLPWSECPVIRNGTVAVVEPECEKSSATTYFWYREALDISNSISESGGLNWKMTVCLLVAWSIVGMAVVKGIQSSGKVMYFSSLFPYVVLACFLVRGLLLRGAVDGILHMFTPKLDKMLDPQVWREAATQVFFALGLGFGGVIAFSSYNKQDNNCHFDAALVSFINFFTSVLATLVVFAVLGFKANIMNEKCVVENAEKILGYLNSNVLSRDLIPPHVNFSHLTTKDYSEMYNVIMTVKEKQFSALGLDPCLLEDELDKSVQGTGLAFIAFTEAMTHFPASPFWSVMFFLMLINLGLGSMIGTMAGITTPIIDTFKVPKEMFTVGCCVFAFFVGLLFVQRSGNYFVTMFDDYSATLPLTVIVILENIAVAWIYGTKKFMQELTEMLGFRPYRFYFYMWKFVSPLCMAVLTTASIIQLGVSPPGYSAWIKEEAAERYLYFPNWAMALLITLIAVATLPIPVVFILRHFHLLSDGSNTLSVSYKKGRMMKDISNLEENDETRFILSKVPSEAPSPMPTHRSYLGPGSTSPLESSSHPNGRYGSGYLLASTPESEL</sequence>
<comment type="function">
    <text evidence="5 6">Synaptic vesicle transporter with apparent selectivity for neutral amino acids. The transport is sodium-coupled but chloride-independent, likely driven by the proton electrochemical gradient generated by vacuolar H(+)-ATPase in an overall electrogenic mechanism. May contribute to the synaptic uptake of neurotransmitter precursors in a process coupled in part to vesicle exocytosis.</text>
</comment>
<comment type="catalytic activity">
    <reaction evidence="9 10">
        <text>L-proline(in) + Na(+)(in) = L-proline(out) + Na(+)(out)</text>
        <dbReference type="Rhea" id="RHEA:28967"/>
        <dbReference type="ChEBI" id="CHEBI:29101"/>
        <dbReference type="ChEBI" id="CHEBI:60039"/>
    </reaction>
</comment>
<comment type="catalytic activity">
    <reaction evidence="9 10">
        <text>L-leucine(in) + Na(+)(in) = L-leucine(out) + Na(+)(out)</text>
        <dbReference type="Rhea" id="RHEA:29263"/>
        <dbReference type="ChEBI" id="CHEBI:29101"/>
        <dbReference type="ChEBI" id="CHEBI:57427"/>
    </reaction>
</comment>
<comment type="catalytic activity">
    <reaction evidence="9 10">
        <text>glycine(in) + Na(+)(in) = glycine(out) + Na(+)(out)</text>
        <dbReference type="Rhea" id="RHEA:68228"/>
        <dbReference type="ChEBI" id="CHEBI:29101"/>
        <dbReference type="ChEBI" id="CHEBI:57305"/>
    </reaction>
</comment>
<comment type="catalytic activity">
    <reaction evidence="9 10">
        <text>L-alanine(in) + Na(+)(in) = L-alanine(out) + Na(+)(out)</text>
        <dbReference type="Rhea" id="RHEA:29283"/>
        <dbReference type="ChEBI" id="CHEBI:29101"/>
        <dbReference type="ChEBI" id="CHEBI:57972"/>
    </reaction>
</comment>
<comment type="catalytic activity">
    <reaction evidence="9 10">
        <text>L-glutamine(in) + Na(+)(in) = L-glutamine(out) + Na(+)(out)</text>
        <dbReference type="Rhea" id="RHEA:68236"/>
        <dbReference type="ChEBI" id="CHEBI:29101"/>
        <dbReference type="ChEBI" id="CHEBI:58359"/>
    </reaction>
</comment>
<comment type="biophysicochemical properties">
    <kinetics>
        <KM evidence="5">0.86 mM for L-proline</KM>
        <KM evidence="6">0.36 mM for L-proline</KM>
        <KM evidence="5">1.72 mM for glycine</KM>
        <KM evidence="6">5.2 mM for L-glutamine</KM>
        <Vmax evidence="5">172.0 pmol/min/mg enzyme for L-proline</Vmax>
        <Vmax evidence="5">199.0 pmol/min/mg enzyme for glycine</Vmax>
    </kinetics>
    <phDependence>
        <text evidence="5 6">Optimum pH is 8.5.</text>
    </phDependence>
</comment>
<comment type="subcellular location">
    <subcellularLocation>
        <location evidence="5 6">Cytoplasmic vesicle</location>
        <location evidence="5 6">Secretory vesicle</location>
        <location evidence="5 6">Synaptic vesicle membrane</location>
        <topology evidence="5 6">Multi-pass membrane protein</topology>
    </subcellularLocation>
    <subcellularLocation>
        <location evidence="1">Postsynapse</location>
    </subcellularLocation>
    <subcellularLocation>
        <location evidence="1">Presynapse</location>
    </subcellularLocation>
    <text evidence="1">Localizes at synaptic junctions - at both pre- and post-synaptic sites - particularly in excitatory glutamatergic terminals.</text>
</comment>
<comment type="tissue specificity">
    <text evidence="4 5">Found exclusively in the central nervous system and is more abundant in the cerebellum and the cerebral cortex. Expressed in PC-12 cell line.</text>
</comment>
<comment type="similarity">
    <text evidence="8">Belongs to the sodium:neurotransmitter symporter (SNF) (TC 2.A.22) family.</text>
</comment>
<organism>
    <name type="scientific">Rattus norvegicus</name>
    <name type="common">Rat</name>
    <dbReference type="NCBI Taxonomy" id="10116"/>
    <lineage>
        <taxon>Eukaryota</taxon>
        <taxon>Metazoa</taxon>
        <taxon>Chordata</taxon>
        <taxon>Craniata</taxon>
        <taxon>Vertebrata</taxon>
        <taxon>Euteleostomi</taxon>
        <taxon>Mammalia</taxon>
        <taxon>Eutheria</taxon>
        <taxon>Euarchontoglires</taxon>
        <taxon>Glires</taxon>
        <taxon>Rodentia</taxon>
        <taxon>Myomorpha</taxon>
        <taxon>Muroidea</taxon>
        <taxon>Muridae</taxon>
        <taxon>Murinae</taxon>
        <taxon>Rattus</taxon>
    </lineage>
</organism>
<proteinExistence type="evidence at protein level"/>
<protein>
    <recommendedName>
        <fullName>Sodium-dependent neutral amino acid transporter SLC6A17</fullName>
    </recommendedName>
    <alternativeName>
        <fullName>Sodium-dependent neurotransmitter transporter NTT4</fullName>
    </alternativeName>
    <alternativeName>
        <fullName>Solute carrier family 6 member 17</fullName>
    </alternativeName>
</protein>
<feature type="chain" id="PRO_0000214805" description="Sodium-dependent neutral amino acid transporter SLC6A17">
    <location>
        <begin position="1"/>
        <end position="727"/>
    </location>
</feature>
<feature type="topological domain" description="Cytoplasmic" evidence="2">
    <location>
        <begin position="1"/>
        <end position="68"/>
    </location>
</feature>
<feature type="transmembrane region" description="Helical; Name=1" evidence="2">
    <location>
        <begin position="69"/>
        <end position="89"/>
    </location>
</feature>
<feature type="topological domain" description="Extracellular" evidence="2">
    <location>
        <begin position="90"/>
        <end position="96"/>
    </location>
</feature>
<feature type="transmembrane region" description="Helical; Name=2" evidence="2">
    <location>
        <begin position="97"/>
        <end position="116"/>
    </location>
</feature>
<feature type="topological domain" description="Cytoplasmic" evidence="2">
    <location>
        <begin position="117"/>
        <end position="140"/>
    </location>
</feature>
<feature type="transmembrane region" description="Helical; Name=3" evidence="2">
    <location>
        <begin position="141"/>
        <end position="161"/>
    </location>
</feature>
<feature type="topological domain" description="Extracellular" evidence="2">
    <location>
        <begin position="162"/>
        <end position="224"/>
    </location>
</feature>
<feature type="transmembrane region" description="Helical; Name=4" evidence="2">
    <location>
        <begin position="225"/>
        <end position="243"/>
    </location>
</feature>
<feature type="topological domain" description="Cytoplasmic" evidence="2">
    <location>
        <begin position="244"/>
        <end position="251"/>
    </location>
</feature>
<feature type="transmembrane region" description="Helical; Name=5" evidence="2">
    <location>
        <begin position="252"/>
        <end position="269"/>
    </location>
</feature>
<feature type="topological domain" description="Extracellular" evidence="2">
    <location>
        <begin position="270"/>
        <end position="304"/>
    </location>
</feature>
<feature type="transmembrane region" description="Helical; Name=6" evidence="2">
    <location>
        <begin position="305"/>
        <end position="322"/>
    </location>
</feature>
<feature type="topological domain" description="Cytoplasmic" evidence="2">
    <location>
        <begin position="323"/>
        <end position="333"/>
    </location>
</feature>
<feature type="transmembrane region" description="Helical; Name=7" evidence="2">
    <location>
        <begin position="334"/>
        <end position="355"/>
    </location>
</feature>
<feature type="topological domain" description="Extracellular" evidence="2">
    <location>
        <begin position="356"/>
        <end position="451"/>
    </location>
</feature>
<feature type="transmembrane region" description="Helical; Name=8" evidence="2">
    <location>
        <begin position="452"/>
        <end position="471"/>
    </location>
</feature>
<feature type="topological domain" description="Cytoplasmic" evidence="2">
    <location>
        <begin position="472"/>
        <end position="494"/>
    </location>
</feature>
<feature type="transmembrane region" description="Helical; Name=9" evidence="2">
    <location>
        <begin position="495"/>
        <end position="513"/>
    </location>
</feature>
<feature type="topological domain" description="Extracellular" evidence="2">
    <location>
        <begin position="514"/>
        <end position="528"/>
    </location>
</feature>
<feature type="transmembrane region" description="Helical; Name=10" evidence="2">
    <location>
        <begin position="529"/>
        <end position="549"/>
    </location>
</feature>
<feature type="topological domain" description="Cytoplasmic" evidence="2">
    <location>
        <begin position="550"/>
        <end position="569"/>
    </location>
</feature>
<feature type="transmembrane region" description="Helical; Name=11" evidence="2">
    <location>
        <begin position="570"/>
        <end position="591"/>
    </location>
</feature>
<feature type="topological domain" description="Extracellular" evidence="2">
    <location>
        <begin position="592"/>
        <end position="618"/>
    </location>
</feature>
<feature type="transmembrane region" description="Helical; Name=12" evidence="2">
    <location>
        <begin position="619"/>
        <end position="641"/>
    </location>
</feature>
<feature type="topological domain" description="Cytoplasmic" evidence="2">
    <location>
        <begin position="642"/>
        <end position="727"/>
    </location>
</feature>
<feature type="region of interest" description="Disordered" evidence="3">
    <location>
        <begin position="680"/>
        <end position="727"/>
    </location>
</feature>
<feature type="compositionally biased region" description="Polar residues" evidence="3">
    <location>
        <begin position="698"/>
        <end position="709"/>
    </location>
</feature>
<feature type="modified residue" description="Phosphoserine" evidence="1">
    <location>
        <position position="13"/>
    </location>
</feature>
<feature type="modified residue" description="Phosphoserine" evidence="1">
    <location>
        <position position="20"/>
    </location>
</feature>
<feature type="modified residue" description="Phosphotyrosine" evidence="1">
    <location>
        <position position="377"/>
    </location>
</feature>
<feature type="modified residue" description="Phosphoserine" evidence="11">
    <location>
        <position position="665"/>
    </location>
</feature>
<feature type="modified residue" description="Phosphoserine" evidence="11">
    <location>
        <position position="701"/>
    </location>
</feature>
<feature type="glycosylation site" description="N-linked (GlcNAc...) asparagine" evidence="2">
    <location>
        <position position="186"/>
    </location>
</feature>
<feature type="glycosylation site" description="N-linked (GlcNAc...) asparagine" evidence="2">
    <location>
        <position position="393"/>
    </location>
</feature>
<feature type="sequence conflict" description="In Ref. 2; AAC60673." evidence="8" ref="2">
    <original>Y</original>
    <variation>C</variation>
    <location>
        <position position="261"/>
    </location>
</feature>
<feature type="sequence conflict" description="In Ref. 2; AAC60673." evidence="8" ref="2">
    <original>G</original>
    <variation>S</variation>
    <location>
        <position position="499"/>
    </location>
</feature>
<keyword id="KW-0029">Amino-acid transport</keyword>
<keyword id="KW-0966">Cell projection</keyword>
<keyword id="KW-0968">Cytoplasmic vesicle</keyword>
<keyword id="KW-0325">Glycoprotein</keyword>
<keyword id="KW-0406">Ion transport</keyword>
<keyword id="KW-0472">Membrane</keyword>
<keyword id="KW-0532">Neurotransmitter transport</keyword>
<keyword id="KW-0597">Phosphoprotein</keyword>
<keyword id="KW-1185">Reference proteome</keyword>
<keyword id="KW-0915">Sodium</keyword>
<keyword id="KW-0739">Sodium transport</keyword>
<keyword id="KW-0769">Symport</keyword>
<keyword id="KW-0770">Synapse</keyword>
<keyword id="KW-0812">Transmembrane</keyword>
<keyword id="KW-1133">Transmembrane helix</keyword>
<keyword id="KW-0813">Transport</keyword>